<comment type="function">
    <text evidence="1">DNA-dependent RNA polymerase catalyzes the transcription of DNA into RNA using the four ribonucleoside triphosphates as substrates.</text>
</comment>
<comment type="catalytic activity">
    <reaction evidence="1">
        <text>RNA(n) + a ribonucleoside 5'-triphosphate = RNA(n+1) + diphosphate</text>
        <dbReference type="Rhea" id="RHEA:21248"/>
        <dbReference type="Rhea" id="RHEA-COMP:14527"/>
        <dbReference type="Rhea" id="RHEA-COMP:17342"/>
        <dbReference type="ChEBI" id="CHEBI:33019"/>
        <dbReference type="ChEBI" id="CHEBI:61557"/>
        <dbReference type="ChEBI" id="CHEBI:140395"/>
        <dbReference type="EC" id="2.7.7.6"/>
    </reaction>
</comment>
<comment type="subunit">
    <text evidence="1">In plastids the minimal PEP RNA polymerase catalytic core is composed of four subunits: alpha, beta, beta', and beta''. When a (nuclear-encoded) sigma factor is associated with the core the holoenzyme is formed, which can initiate transcription.</text>
</comment>
<comment type="subcellular location">
    <subcellularLocation>
        <location>Plastid</location>
        <location>Chloroplast</location>
    </subcellularLocation>
</comment>
<comment type="domain">
    <text evidence="1">The N-terminal domain is essential for RNAP assembly and basal transcription, whereas the C-terminal domain is involved in interaction with transcriptional regulators and with upstream promoter elements.</text>
</comment>
<comment type="similarity">
    <text evidence="1">Belongs to the RNA polymerase alpha chain family.</text>
</comment>
<proteinExistence type="inferred from homology"/>
<name>RPOA_BARVE</name>
<organism>
    <name type="scientific">Barbarea verna</name>
    <name type="common">Land cress</name>
    <name type="synonym">Erysimum vernum</name>
    <dbReference type="NCBI Taxonomy" id="50458"/>
    <lineage>
        <taxon>Eukaryota</taxon>
        <taxon>Viridiplantae</taxon>
        <taxon>Streptophyta</taxon>
        <taxon>Embryophyta</taxon>
        <taxon>Tracheophyta</taxon>
        <taxon>Spermatophyta</taxon>
        <taxon>Magnoliopsida</taxon>
        <taxon>eudicotyledons</taxon>
        <taxon>Gunneridae</taxon>
        <taxon>Pentapetalae</taxon>
        <taxon>rosids</taxon>
        <taxon>malvids</taxon>
        <taxon>Brassicales</taxon>
        <taxon>Brassicaceae</taxon>
        <taxon>Cardamineae</taxon>
        <taxon>Barbarea</taxon>
    </lineage>
</organism>
<reference key="1">
    <citation type="submission" date="2007-03" db="EMBL/GenBank/DDBJ databases">
        <title>Sequencing analysis of Barbarea verna chloroplast DNA.</title>
        <authorList>
            <person name="Hosouchi T."/>
            <person name="Tsuruoka H."/>
            <person name="Kotani H."/>
        </authorList>
    </citation>
    <scope>NUCLEOTIDE SEQUENCE [LARGE SCALE GENOMIC DNA]</scope>
</reference>
<geneLocation type="chloroplast"/>
<keyword id="KW-0150">Chloroplast</keyword>
<keyword id="KW-0240">DNA-directed RNA polymerase</keyword>
<keyword id="KW-0548">Nucleotidyltransferase</keyword>
<keyword id="KW-0934">Plastid</keyword>
<keyword id="KW-0804">Transcription</keyword>
<keyword id="KW-0808">Transferase</keyword>
<sequence>MVREKVKVSTRTLQWKCVESRRDSKRLYYGRFILSPLMKGQADTIGIAMRRALLGEIEGTCITRAKSENIPHDYSNIVGIQESVHEILMNLNEIVLRSNLYGTRNALICVQGPGYITARDIILPPSVEIIDNTQHIATLTEPIDLCIGLKIERNRGYSLKMSNNFEDRSYPIDAVFMPVQNANHSIHSYGNGNEKQEILFLEIWTNGSLTPKEALHEASRNLINLFIPFLHVEEETFYLENNQHQVTLPLFPFHNRLVNLRKKKKEQGFQYIFIDQLELPPRIYNCLKKSNIHTLLDLLNNSQEDLIKIEHFHIEDVKKILDILEKK</sequence>
<dbReference type="EC" id="2.7.7.6" evidence="1"/>
<dbReference type="EMBL" id="AP009370">
    <property type="protein sequence ID" value="BAF50142.1"/>
    <property type="molecule type" value="Genomic_DNA"/>
</dbReference>
<dbReference type="RefSeq" id="YP_001123318.1">
    <property type="nucleotide sequence ID" value="NC_009269.1"/>
</dbReference>
<dbReference type="SMR" id="A4QKD7"/>
<dbReference type="GeneID" id="4961925"/>
<dbReference type="GO" id="GO:0009507">
    <property type="term" value="C:chloroplast"/>
    <property type="evidence" value="ECO:0007669"/>
    <property type="project" value="UniProtKB-SubCell"/>
</dbReference>
<dbReference type="GO" id="GO:0000428">
    <property type="term" value="C:DNA-directed RNA polymerase complex"/>
    <property type="evidence" value="ECO:0007669"/>
    <property type="project" value="UniProtKB-KW"/>
</dbReference>
<dbReference type="GO" id="GO:0005739">
    <property type="term" value="C:mitochondrion"/>
    <property type="evidence" value="ECO:0007669"/>
    <property type="project" value="GOC"/>
</dbReference>
<dbReference type="GO" id="GO:0003677">
    <property type="term" value="F:DNA binding"/>
    <property type="evidence" value="ECO:0007669"/>
    <property type="project" value="UniProtKB-UniRule"/>
</dbReference>
<dbReference type="GO" id="GO:0003899">
    <property type="term" value="F:DNA-directed RNA polymerase activity"/>
    <property type="evidence" value="ECO:0007669"/>
    <property type="project" value="UniProtKB-UniRule"/>
</dbReference>
<dbReference type="GO" id="GO:0046983">
    <property type="term" value="F:protein dimerization activity"/>
    <property type="evidence" value="ECO:0007669"/>
    <property type="project" value="InterPro"/>
</dbReference>
<dbReference type="GO" id="GO:0006351">
    <property type="term" value="P:DNA-templated transcription"/>
    <property type="evidence" value="ECO:0007669"/>
    <property type="project" value="UniProtKB-UniRule"/>
</dbReference>
<dbReference type="CDD" id="cd06928">
    <property type="entry name" value="RNAP_alpha_NTD"/>
    <property type="match status" value="1"/>
</dbReference>
<dbReference type="FunFam" id="2.170.120.12:FF:000001">
    <property type="entry name" value="DNA-directed RNA polymerase subunit alpha"/>
    <property type="match status" value="1"/>
</dbReference>
<dbReference type="FunFam" id="3.30.1360.10:FF:000039">
    <property type="entry name" value="DNA-directed RNA polymerase subunit alpha"/>
    <property type="match status" value="1"/>
</dbReference>
<dbReference type="Gene3D" id="1.10.150.20">
    <property type="entry name" value="5' to 3' exonuclease, C-terminal subdomain"/>
    <property type="match status" value="1"/>
</dbReference>
<dbReference type="Gene3D" id="2.170.120.12">
    <property type="entry name" value="DNA-directed RNA polymerase, insert domain"/>
    <property type="match status" value="1"/>
</dbReference>
<dbReference type="Gene3D" id="3.30.1360.10">
    <property type="entry name" value="RNA polymerase, RBP11-like subunit"/>
    <property type="match status" value="1"/>
</dbReference>
<dbReference type="HAMAP" id="MF_00059">
    <property type="entry name" value="RNApol_bact_RpoA"/>
    <property type="match status" value="1"/>
</dbReference>
<dbReference type="InterPro" id="IPR011262">
    <property type="entry name" value="DNA-dir_RNA_pol_insert"/>
</dbReference>
<dbReference type="InterPro" id="IPR011263">
    <property type="entry name" value="DNA-dir_RNA_pol_RpoA/D/Rpb3"/>
</dbReference>
<dbReference type="InterPro" id="IPR011773">
    <property type="entry name" value="DNA-dir_RpoA"/>
</dbReference>
<dbReference type="InterPro" id="IPR036603">
    <property type="entry name" value="RBP11-like"/>
</dbReference>
<dbReference type="InterPro" id="IPR011260">
    <property type="entry name" value="RNAP_asu_C"/>
</dbReference>
<dbReference type="InterPro" id="IPR036643">
    <property type="entry name" value="RNApol_insert_sf"/>
</dbReference>
<dbReference type="NCBIfam" id="TIGR02027">
    <property type="entry name" value="rpoA"/>
    <property type="match status" value="1"/>
</dbReference>
<dbReference type="Pfam" id="PF01000">
    <property type="entry name" value="RNA_pol_A_bac"/>
    <property type="match status" value="1"/>
</dbReference>
<dbReference type="Pfam" id="PF03118">
    <property type="entry name" value="RNA_pol_A_CTD"/>
    <property type="match status" value="1"/>
</dbReference>
<dbReference type="Pfam" id="PF01193">
    <property type="entry name" value="RNA_pol_L"/>
    <property type="match status" value="1"/>
</dbReference>
<dbReference type="SMART" id="SM00662">
    <property type="entry name" value="RPOLD"/>
    <property type="match status" value="1"/>
</dbReference>
<dbReference type="SUPFAM" id="SSF47789">
    <property type="entry name" value="C-terminal domain of RNA polymerase alpha subunit"/>
    <property type="match status" value="1"/>
</dbReference>
<dbReference type="SUPFAM" id="SSF56553">
    <property type="entry name" value="Insert subdomain of RNA polymerase alpha subunit"/>
    <property type="match status" value="1"/>
</dbReference>
<dbReference type="SUPFAM" id="SSF55257">
    <property type="entry name" value="RBP11-like subunits of RNA polymerase"/>
    <property type="match status" value="1"/>
</dbReference>
<gene>
    <name evidence="1" type="primary">rpoA</name>
</gene>
<protein>
    <recommendedName>
        <fullName evidence="1">DNA-directed RNA polymerase subunit alpha</fullName>
        <shortName evidence="1">PEP</shortName>
        <ecNumber evidence="1">2.7.7.6</ecNumber>
    </recommendedName>
    <alternativeName>
        <fullName evidence="1">Plastid-encoded RNA polymerase subunit alpha</fullName>
        <shortName evidence="1">RNA polymerase subunit alpha</shortName>
    </alternativeName>
</protein>
<feature type="chain" id="PRO_0000296887" description="DNA-directed RNA polymerase subunit alpha">
    <location>
        <begin position="1"/>
        <end position="327"/>
    </location>
</feature>
<feature type="region of interest" description="Alpha N-terminal domain (alpha-NTD)" evidence="1">
    <location>
        <begin position="1"/>
        <end position="233"/>
    </location>
</feature>
<feature type="region of interest" description="Alpha C-terminal domain (alpha-CTD)" evidence="1">
    <location>
        <begin position="266"/>
        <end position="327"/>
    </location>
</feature>
<accession>A4QKD7</accession>
<evidence type="ECO:0000255" key="1">
    <source>
        <dbReference type="HAMAP-Rule" id="MF_00059"/>
    </source>
</evidence>